<keyword id="KW-1185">Reference proteome</keyword>
<keyword id="KW-0687">Ribonucleoprotein</keyword>
<keyword id="KW-0689">Ribosomal protein</keyword>
<keyword id="KW-0694">RNA-binding</keyword>
<keyword id="KW-0699">rRNA-binding</keyword>
<comment type="function">
    <text evidence="1">Binds directly to 16S ribosomal RNA.</text>
</comment>
<comment type="similarity">
    <text evidence="1">Belongs to the bacterial ribosomal protein bS20 family.</text>
</comment>
<reference key="1">
    <citation type="journal article" date="2008" name="BMC Genomics">
        <title>Genomics of an extreme psychrophile, Psychromonas ingrahamii.</title>
        <authorList>
            <person name="Riley M."/>
            <person name="Staley J.T."/>
            <person name="Danchin A."/>
            <person name="Wang T.Z."/>
            <person name="Brettin T.S."/>
            <person name="Hauser L.J."/>
            <person name="Land M.L."/>
            <person name="Thompson L.S."/>
        </authorList>
    </citation>
    <scope>NUCLEOTIDE SEQUENCE [LARGE SCALE GENOMIC DNA]</scope>
    <source>
        <strain>DSM 17664 / CCUG 51855 / 37</strain>
    </source>
</reference>
<sequence length="86" mass="9574">MANIKSAKKRALQSEKSRKHNASRRTMMRTFIKKVVVAIEAANKEVATAEFVKLQSVLDSYATKGLINKNTAARKKSRLSAKIKAL</sequence>
<dbReference type="EMBL" id="CP000510">
    <property type="protein sequence ID" value="ABM04961.1"/>
    <property type="molecule type" value="Genomic_DNA"/>
</dbReference>
<dbReference type="RefSeq" id="WP_011771513.1">
    <property type="nucleotide sequence ID" value="NC_008709.1"/>
</dbReference>
<dbReference type="SMR" id="A1SZP6"/>
<dbReference type="STRING" id="357804.Ping_3274"/>
<dbReference type="KEGG" id="pin:Ping_3274"/>
<dbReference type="eggNOG" id="COG0268">
    <property type="taxonomic scope" value="Bacteria"/>
</dbReference>
<dbReference type="HOGENOM" id="CLU_160655_4_0_6"/>
<dbReference type="OrthoDB" id="9807974at2"/>
<dbReference type="Proteomes" id="UP000000639">
    <property type="component" value="Chromosome"/>
</dbReference>
<dbReference type="GO" id="GO:0005829">
    <property type="term" value="C:cytosol"/>
    <property type="evidence" value="ECO:0007669"/>
    <property type="project" value="TreeGrafter"/>
</dbReference>
<dbReference type="GO" id="GO:0015935">
    <property type="term" value="C:small ribosomal subunit"/>
    <property type="evidence" value="ECO:0007669"/>
    <property type="project" value="TreeGrafter"/>
</dbReference>
<dbReference type="GO" id="GO:0070181">
    <property type="term" value="F:small ribosomal subunit rRNA binding"/>
    <property type="evidence" value="ECO:0007669"/>
    <property type="project" value="TreeGrafter"/>
</dbReference>
<dbReference type="GO" id="GO:0003735">
    <property type="term" value="F:structural constituent of ribosome"/>
    <property type="evidence" value="ECO:0007669"/>
    <property type="project" value="InterPro"/>
</dbReference>
<dbReference type="GO" id="GO:0006412">
    <property type="term" value="P:translation"/>
    <property type="evidence" value="ECO:0007669"/>
    <property type="project" value="UniProtKB-UniRule"/>
</dbReference>
<dbReference type="FunFam" id="1.20.58.110:FF:000001">
    <property type="entry name" value="30S ribosomal protein S20"/>
    <property type="match status" value="1"/>
</dbReference>
<dbReference type="Gene3D" id="1.20.58.110">
    <property type="entry name" value="Ribosomal protein S20"/>
    <property type="match status" value="1"/>
</dbReference>
<dbReference type="HAMAP" id="MF_00500">
    <property type="entry name" value="Ribosomal_bS20"/>
    <property type="match status" value="1"/>
</dbReference>
<dbReference type="InterPro" id="IPR002583">
    <property type="entry name" value="Ribosomal_bS20"/>
</dbReference>
<dbReference type="InterPro" id="IPR036510">
    <property type="entry name" value="Ribosomal_bS20_sf"/>
</dbReference>
<dbReference type="NCBIfam" id="TIGR00029">
    <property type="entry name" value="S20"/>
    <property type="match status" value="1"/>
</dbReference>
<dbReference type="PANTHER" id="PTHR33398">
    <property type="entry name" value="30S RIBOSOMAL PROTEIN S20"/>
    <property type="match status" value="1"/>
</dbReference>
<dbReference type="PANTHER" id="PTHR33398:SF1">
    <property type="entry name" value="SMALL RIBOSOMAL SUBUNIT PROTEIN BS20C"/>
    <property type="match status" value="1"/>
</dbReference>
<dbReference type="Pfam" id="PF01649">
    <property type="entry name" value="Ribosomal_S20p"/>
    <property type="match status" value="1"/>
</dbReference>
<dbReference type="SUPFAM" id="SSF46992">
    <property type="entry name" value="Ribosomal protein S20"/>
    <property type="match status" value="1"/>
</dbReference>
<evidence type="ECO:0000255" key="1">
    <source>
        <dbReference type="HAMAP-Rule" id="MF_00500"/>
    </source>
</evidence>
<evidence type="ECO:0000256" key="2">
    <source>
        <dbReference type="SAM" id="MobiDB-lite"/>
    </source>
</evidence>
<evidence type="ECO:0000305" key="3"/>
<feature type="chain" id="PRO_1000014636" description="Small ribosomal subunit protein bS20">
    <location>
        <begin position="1"/>
        <end position="86"/>
    </location>
</feature>
<feature type="region of interest" description="Disordered" evidence="2">
    <location>
        <begin position="1"/>
        <end position="26"/>
    </location>
</feature>
<name>RS20_PSYIN</name>
<accession>A1SZP6</accession>
<gene>
    <name evidence="1" type="primary">rpsT</name>
    <name type="ordered locus">Ping_3274</name>
</gene>
<proteinExistence type="inferred from homology"/>
<protein>
    <recommendedName>
        <fullName evidence="1">Small ribosomal subunit protein bS20</fullName>
    </recommendedName>
    <alternativeName>
        <fullName evidence="3">30S ribosomal protein S20</fullName>
    </alternativeName>
</protein>
<organism>
    <name type="scientific">Psychromonas ingrahamii (strain DSM 17664 / CCUG 51855 / 37)</name>
    <dbReference type="NCBI Taxonomy" id="357804"/>
    <lineage>
        <taxon>Bacteria</taxon>
        <taxon>Pseudomonadati</taxon>
        <taxon>Pseudomonadota</taxon>
        <taxon>Gammaproteobacteria</taxon>
        <taxon>Alteromonadales</taxon>
        <taxon>Psychromonadaceae</taxon>
        <taxon>Psychromonas</taxon>
    </lineage>
</organism>